<accession>Q6ANL8</accession>
<evidence type="ECO:0000255" key="1">
    <source>
        <dbReference type="HAMAP-Rule" id="MF_01366"/>
    </source>
</evidence>
<evidence type="ECO:0000305" key="2"/>
<protein>
    <recommendedName>
        <fullName evidence="1">Large ribosomal subunit protein uL13</fullName>
    </recommendedName>
    <alternativeName>
        <fullName evidence="2">50S ribosomal protein L13</fullName>
    </alternativeName>
</protein>
<keyword id="KW-1185">Reference proteome</keyword>
<keyword id="KW-0687">Ribonucleoprotein</keyword>
<keyword id="KW-0689">Ribosomal protein</keyword>
<name>RL13_DESPS</name>
<organism>
    <name type="scientific">Desulfotalea psychrophila (strain LSv54 / DSM 12343)</name>
    <dbReference type="NCBI Taxonomy" id="177439"/>
    <lineage>
        <taxon>Bacteria</taxon>
        <taxon>Pseudomonadati</taxon>
        <taxon>Thermodesulfobacteriota</taxon>
        <taxon>Desulfobulbia</taxon>
        <taxon>Desulfobulbales</taxon>
        <taxon>Desulfocapsaceae</taxon>
        <taxon>Desulfotalea</taxon>
    </lineage>
</organism>
<dbReference type="EMBL" id="CR522870">
    <property type="protein sequence ID" value="CAG36056.1"/>
    <property type="molecule type" value="Genomic_DNA"/>
</dbReference>
<dbReference type="RefSeq" id="WP_011188568.1">
    <property type="nucleotide sequence ID" value="NC_006138.1"/>
</dbReference>
<dbReference type="SMR" id="Q6ANL8"/>
<dbReference type="STRING" id="177439.DP1327"/>
<dbReference type="KEGG" id="dps:DP1327"/>
<dbReference type="eggNOG" id="COG0102">
    <property type="taxonomic scope" value="Bacteria"/>
</dbReference>
<dbReference type="HOGENOM" id="CLU_082184_2_2_7"/>
<dbReference type="OrthoDB" id="9801330at2"/>
<dbReference type="Proteomes" id="UP000000602">
    <property type="component" value="Chromosome"/>
</dbReference>
<dbReference type="GO" id="GO:0022625">
    <property type="term" value="C:cytosolic large ribosomal subunit"/>
    <property type="evidence" value="ECO:0007669"/>
    <property type="project" value="TreeGrafter"/>
</dbReference>
<dbReference type="GO" id="GO:0003729">
    <property type="term" value="F:mRNA binding"/>
    <property type="evidence" value="ECO:0007669"/>
    <property type="project" value="TreeGrafter"/>
</dbReference>
<dbReference type="GO" id="GO:0003735">
    <property type="term" value="F:structural constituent of ribosome"/>
    <property type="evidence" value="ECO:0007669"/>
    <property type="project" value="InterPro"/>
</dbReference>
<dbReference type="GO" id="GO:0017148">
    <property type="term" value="P:negative regulation of translation"/>
    <property type="evidence" value="ECO:0007669"/>
    <property type="project" value="TreeGrafter"/>
</dbReference>
<dbReference type="GO" id="GO:0006412">
    <property type="term" value="P:translation"/>
    <property type="evidence" value="ECO:0007669"/>
    <property type="project" value="UniProtKB-UniRule"/>
</dbReference>
<dbReference type="CDD" id="cd00392">
    <property type="entry name" value="Ribosomal_L13"/>
    <property type="match status" value="1"/>
</dbReference>
<dbReference type="FunFam" id="3.90.1180.10:FF:000001">
    <property type="entry name" value="50S ribosomal protein L13"/>
    <property type="match status" value="1"/>
</dbReference>
<dbReference type="Gene3D" id="3.90.1180.10">
    <property type="entry name" value="Ribosomal protein L13"/>
    <property type="match status" value="1"/>
</dbReference>
<dbReference type="HAMAP" id="MF_01366">
    <property type="entry name" value="Ribosomal_uL13"/>
    <property type="match status" value="1"/>
</dbReference>
<dbReference type="InterPro" id="IPR005822">
    <property type="entry name" value="Ribosomal_uL13"/>
</dbReference>
<dbReference type="InterPro" id="IPR005823">
    <property type="entry name" value="Ribosomal_uL13_bac-type"/>
</dbReference>
<dbReference type="InterPro" id="IPR023563">
    <property type="entry name" value="Ribosomal_uL13_CS"/>
</dbReference>
<dbReference type="InterPro" id="IPR036899">
    <property type="entry name" value="Ribosomal_uL13_sf"/>
</dbReference>
<dbReference type="NCBIfam" id="TIGR01066">
    <property type="entry name" value="rplM_bact"/>
    <property type="match status" value="1"/>
</dbReference>
<dbReference type="PANTHER" id="PTHR11545:SF2">
    <property type="entry name" value="LARGE RIBOSOMAL SUBUNIT PROTEIN UL13M"/>
    <property type="match status" value="1"/>
</dbReference>
<dbReference type="PANTHER" id="PTHR11545">
    <property type="entry name" value="RIBOSOMAL PROTEIN L13"/>
    <property type="match status" value="1"/>
</dbReference>
<dbReference type="Pfam" id="PF00572">
    <property type="entry name" value="Ribosomal_L13"/>
    <property type="match status" value="1"/>
</dbReference>
<dbReference type="PIRSF" id="PIRSF002181">
    <property type="entry name" value="Ribosomal_L13"/>
    <property type="match status" value="1"/>
</dbReference>
<dbReference type="SUPFAM" id="SSF52161">
    <property type="entry name" value="Ribosomal protein L13"/>
    <property type="match status" value="1"/>
</dbReference>
<dbReference type="PROSITE" id="PS00783">
    <property type="entry name" value="RIBOSOMAL_L13"/>
    <property type="match status" value="1"/>
</dbReference>
<feature type="chain" id="PRO_0000261720" description="Large ribosomal subunit protein uL13">
    <location>
        <begin position="1"/>
        <end position="142"/>
    </location>
</feature>
<sequence length="142" mass="15948">MKTYLAPVNEIEKEWYVVDAENKVLGRLASEIASRLRGKHKPTFSSFIDNGDFIVVTNAEKIALTGKKWDDKTYYRHTGYIGGIKETSAKELLEKHPTDLITKAVRGMLPKNKMGRAQLKKLKVYVGAAHPHAAQQPTVLDI</sequence>
<comment type="function">
    <text evidence="1">This protein is one of the early assembly proteins of the 50S ribosomal subunit, although it is not seen to bind rRNA by itself. It is important during the early stages of 50S assembly.</text>
</comment>
<comment type="subunit">
    <text evidence="1">Part of the 50S ribosomal subunit.</text>
</comment>
<comment type="similarity">
    <text evidence="1">Belongs to the universal ribosomal protein uL13 family.</text>
</comment>
<reference key="1">
    <citation type="journal article" date="2004" name="Environ. Microbiol.">
        <title>The genome of Desulfotalea psychrophila, a sulfate-reducing bacterium from permanently cold Arctic sediments.</title>
        <authorList>
            <person name="Rabus R."/>
            <person name="Ruepp A."/>
            <person name="Frickey T."/>
            <person name="Rattei T."/>
            <person name="Fartmann B."/>
            <person name="Stark M."/>
            <person name="Bauer M."/>
            <person name="Zibat A."/>
            <person name="Lombardot T."/>
            <person name="Becker I."/>
            <person name="Amann J."/>
            <person name="Gellner K."/>
            <person name="Teeling H."/>
            <person name="Leuschner W.D."/>
            <person name="Gloeckner F.-O."/>
            <person name="Lupas A.N."/>
            <person name="Amann R."/>
            <person name="Klenk H.-P."/>
        </authorList>
    </citation>
    <scope>NUCLEOTIDE SEQUENCE [LARGE SCALE GENOMIC DNA]</scope>
    <source>
        <strain>DSM 12343 / LSv54</strain>
    </source>
</reference>
<gene>
    <name evidence="1" type="primary">rplM</name>
    <name type="ordered locus">DP1327</name>
</gene>
<proteinExistence type="inferred from homology"/>